<comment type="miscellaneous">
    <text>PGP4-D is required for growth within mammalian cells.</text>
</comment>
<feature type="chain" id="PRO_0000391801" description="Virulence plasmid protein pGP4-D">
    <location>
        <begin position="1"/>
        <end position="102"/>
    </location>
</feature>
<dbReference type="EMBL" id="X07547">
    <property type="protein sequence ID" value="CAA30424.1"/>
    <property type="molecule type" value="Genomic_DNA"/>
</dbReference>
<dbReference type="EMBL" id="AM886278">
    <property type="protein sequence ID" value="CAP09058.1"/>
    <property type="molecule type" value="Genomic_DNA"/>
</dbReference>
<dbReference type="PIR" id="S02221">
    <property type="entry name" value="S02221"/>
</dbReference>
<dbReference type="RefSeq" id="YP_001654089.1">
    <property type="nucleotide sequence ID" value="NC_010286.1"/>
</dbReference>
<dbReference type="SMR" id="B0BCM0"/>
<reference key="1">
    <citation type="journal article" date="1988" name="Mol. Microbiol.">
        <title>The structure of a plasmid of Chlamydia trachomatis believed to be required for growth within mammalian cells.</title>
        <authorList>
            <person name="Comanducci M."/>
            <person name="Ricci S."/>
            <person name="Ratti G."/>
        </authorList>
    </citation>
    <scope>NUCLEOTIDE SEQUENCE [GENOMIC DNA]</scope>
    <source>
        <plasmid>pLGV440</plasmid>
    </source>
</reference>
<reference key="2">
    <citation type="journal article" date="2008" name="Genome Res.">
        <title>Chlamydia trachomatis: genome sequence analysis of lymphogranuloma venereum isolates.</title>
        <authorList>
            <person name="Thomson N.R."/>
            <person name="Holden M.T.G."/>
            <person name="Carder C."/>
            <person name="Lennard N."/>
            <person name="Lockey S.J."/>
            <person name="Marsh P."/>
            <person name="Skipp P."/>
            <person name="O'Connor C.D."/>
            <person name="Goodhead I."/>
            <person name="Norbertzcak H."/>
            <person name="Harris B."/>
            <person name="Ormond D."/>
            <person name="Rance R."/>
            <person name="Quail M.A."/>
            <person name="Parkhill J."/>
            <person name="Stephens R.S."/>
            <person name="Clarke I.N."/>
        </authorList>
    </citation>
    <scope>NUCLEOTIDE SEQUENCE [LARGE SCALE GENOMIC DNA]</scope>
    <source>
        <strain>ATCC VR-902B / DSM 19102 / 434/Bu</strain>
        <plasmid>pL2</plasmid>
    </source>
</reference>
<organism>
    <name type="scientific">Chlamydia trachomatis serovar L2 (strain ATCC VR-902B / DSM 19102 / 434/Bu)</name>
    <dbReference type="NCBI Taxonomy" id="471472"/>
    <lineage>
        <taxon>Bacteria</taxon>
        <taxon>Pseudomonadati</taxon>
        <taxon>Chlamydiota</taxon>
        <taxon>Chlamydiia</taxon>
        <taxon>Chlamydiales</taxon>
        <taxon>Chlamydiaceae</taxon>
        <taxon>Chlamydia/Chlamydophila group</taxon>
        <taxon>Chlamydia</taxon>
    </lineage>
</organism>
<proteinExistence type="predicted"/>
<gene>
    <name type="ordered locus">pL2-06</name>
</gene>
<sequence length="102" mass="11799">MQNKSKVRDDFIKIVKDVKKDFPELDLKIRVNKEKVTFLNSPLELYHKSVSLILGLLQQIENSLGLFPDSPVLEKLEDNSLKLKKALIMLILSRKDMFSKAE</sequence>
<name>GP4D_CHLT2</name>
<keyword id="KW-0614">Plasmid</keyword>
<geneLocation type="plasmid">
    <name>pL2</name>
</geneLocation>
<geneLocation type="plasmid">
    <name>pLGV440</name>
</geneLocation>
<accession>B0BCM0</accession>
<accession>P08785</accession>
<protein>
    <recommendedName>
        <fullName>Virulence plasmid protein pGP4-D</fullName>
    </recommendedName>
    <alternativeName>
        <fullName>Protein P-8</fullName>
    </alternativeName>
</protein>